<evidence type="ECO:0000255" key="1">
    <source>
        <dbReference type="HAMAP-Rule" id="MF_00115"/>
    </source>
</evidence>
<evidence type="ECO:0000256" key="2">
    <source>
        <dbReference type="SAM" id="MobiDB-lite"/>
    </source>
</evidence>
<accession>B8ZU13</accession>
<keyword id="KW-1003">Cell membrane</keyword>
<keyword id="KW-0407">Ion channel</keyword>
<keyword id="KW-0406">Ion transport</keyword>
<keyword id="KW-0472">Membrane</keyword>
<keyword id="KW-0812">Transmembrane</keyword>
<keyword id="KW-1133">Transmembrane helix</keyword>
<keyword id="KW-0813">Transport</keyword>
<gene>
    <name evidence="1" type="primary">mscL</name>
    <name type="ordered locus">MLBr00178</name>
</gene>
<reference key="1">
    <citation type="journal article" date="2009" name="Nat. Genet.">
        <title>Comparative genomic and phylogeographic analysis of Mycobacterium leprae.</title>
        <authorList>
            <person name="Monot M."/>
            <person name="Honore N."/>
            <person name="Garnier T."/>
            <person name="Zidane N."/>
            <person name="Sherafi D."/>
            <person name="Paniz-Mondolfi A."/>
            <person name="Matsuoka M."/>
            <person name="Taylor G.M."/>
            <person name="Donoghue H.D."/>
            <person name="Bouwman A."/>
            <person name="Mays S."/>
            <person name="Watson C."/>
            <person name="Lockwood D."/>
            <person name="Khamispour A."/>
            <person name="Dowlati Y."/>
            <person name="Jianping S."/>
            <person name="Rea T.H."/>
            <person name="Vera-Cabrera L."/>
            <person name="Stefani M.M."/>
            <person name="Banu S."/>
            <person name="Macdonald M."/>
            <person name="Sapkota B.R."/>
            <person name="Spencer J.S."/>
            <person name="Thomas J."/>
            <person name="Harshman K."/>
            <person name="Singh P."/>
            <person name="Busso P."/>
            <person name="Gattiker A."/>
            <person name="Rougemont J."/>
            <person name="Brennan P.J."/>
            <person name="Cole S.T."/>
        </authorList>
    </citation>
    <scope>NUCLEOTIDE SEQUENCE [LARGE SCALE GENOMIC DNA]</scope>
    <source>
        <strain>Br4923</strain>
    </source>
</reference>
<name>MSCL_MYCLB</name>
<feature type="chain" id="PRO_1000191381" description="Large-conductance mechanosensitive channel">
    <location>
        <begin position="1"/>
        <end position="154"/>
    </location>
</feature>
<feature type="transmembrane region" description="Helical" evidence="1">
    <location>
        <begin position="12"/>
        <end position="32"/>
    </location>
</feature>
<feature type="transmembrane region" description="Helical" evidence="1">
    <location>
        <begin position="71"/>
        <end position="91"/>
    </location>
</feature>
<feature type="region of interest" description="Disordered" evidence="2">
    <location>
        <begin position="129"/>
        <end position="154"/>
    </location>
</feature>
<proteinExistence type="inferred from homology"/>
<protein>
    <recommendedName>
        <fullName evidence="1">Large-conductance mechanosensitive channel</fullName>
    </recommendedName>
</protein>
<sequence>MFRGFKEFLSRGNIVDLAVAVVIGTAFTALITKFTDSIITPLINRVGVNQQTNISPLRIDIGGDQAIDLNIVLSAAINFLLIALVVYFLVVLPYTTIRKHGEVEQFDTDLIGNQVVLLAEIRDLLAQSNGAPSGRHVDTADLTPTPNHEPRADT</sequence>
<comment type="function">
    <text evidence="1">Channel that opens in response to stretch forces in the membrane lipid bilayer. May participate in the regulation of osmotic pressure changes within the cell.</text>
</comment>
<comment type="subunit">
    <text evidence="1">Homopentamer.</text>
</comment>
<comment type="subcellular location">
    <subcellularLocation>
        <location evidence="1">Cell membrane</location>
        <topology evidence="1">Multi-pass membrane protein</topology>
    </subcellularLocation>
</comment>
<comment type="similarity">
    <text evidence="1">Belongs to the MscL family.</text>
</comment>
<dbReference type="EMBL" id="FM211192">
    <property type="protein sequence ID" value="CAR70271.1"/>
    <property type="molecule type" value="Genomic_DNA"/>
</dbReference>
<dbReference type="SMR" id="B8ZU13"/>
<dbReference type="KEGG" id="mlb:MLBr00178"/>
<dbReference type="HOGENOM" id="CLU_095787_1_1_11"/>
<dbReference type="Proteomes" id="UP000006900">
    <property type="component" value="Chromosome"/>
</dbReference>
<dbReference type="GO" id="GO:0005886">
    <property type="term" value="C:plasma membrane"/>
    <property type="evidence" value="ECO:0007669"/>
    <property type="project" value="UniProtKB-SubCell"/>
</dbReference>
<dbReference type="GO" id="GO:0008381">
    <property type="term" value="F:mechanosensitive monoatomic ion channel activity"/>
    <property type="evidence" value="ECO:0007669"/>
    <property type="project" value="UniProtKB-UniRule"/>
</dbReference>
<dbReference type="Gene3D" id="1.20.5.220">
    <property type="match status" value="1"/>
</dbReference>
<dbReference type="Gene3D" id="1.10.1200.120">
    <property type="entry name" value="Large-conductance mechanosensitive channel, MscL, domain 1"/>
    <property type="match status" value="1"/>
</dbReference>
<dbReference type="HAMAP" id="MF_00115">
    <property type="entry name" value="MscL"/>
    <property type="match status" value="1"/>
</dbReference>
<dbReference type="InterPro" id="IPR019823">
    <property type="entry name" value="Mechanosensitive_channel_CS"/>
</dbReference>
<dbReference type="InterPro" id="IPR001185">
    <property type="entry name" value="MS_channel"/>
</dbReference>
<dbReference type="InterPro" id="IPR037673">
    <property type="entry name" value="MSC/AndL"/>
</dbReference>
<dbReference type="InterPro" id="IPR036019">
    <property type="entry name" value="MscL_channel"/>
</dbReference>
<dbReference type="NCBIfam" id="TIGR00220">
    <property type="entry name" value="mscL"/>
    <property type="match status" value="1"/>
</dbReference>
<dbReference type="NCBIfam" id="NF001842">
    <property type="entry name" value="PRK00567.1-3"/>
    <property type="match status" value="1"/>
</dbReference>
<dbReference type="PANTHER" id="PTHR30266:SF2">
    <property type="entry name" value="LARGE-CONDUCTANCE MECHANOSENSITIVE CHANNEL"/>
    <property type="match status" value="1"/>
</dbReference>
<dbReference type="PANTHER" id="PTHR30266">
    <property type="entry name" value="MECHANOSENSITIVE CHANNEL MSCL"/>
    <property type="match status" value="1"/>
</dbReference>
<dbReference type="Pfam" id="PF01741">
    <property type="entry name" value="MscL"/>
    <property type="match status" value="1"/>
</dbReference>
<dbReference type="PRINTS" id="PR01264">
    <property type="entry name" value="MECHCHANNEL"/>
</dbReference>
<dbReference type="SUPFAM" id="SSF81330">
    <property type="entry name" value="Gated mechanosensitive channel"/>
    <property type="match status" value="1"/>
</dbReference>
<dbReference type="PROSITE" id="PS01327">
    <property type="entry name" value="MSCL"/>
    <property type="match status" value="1"/>
</dbReference>
<organism>
    <name type="scientific">Mycobacterium leprae (strain Br4923)</name>
    <dbReference type="NCBI Taxonomy" id="561304"/>
    <lineage>
        <taxon>Bacteria</taxon>
        <taxon>Bacillati</taxon>
        <taxon>Actinomycetota</taxon>
        <taxon>Actinomycetes</taxon>
        <taxon>Mycobacteriales</taxon>
        <taxon>Mycobacteriaceae</taxon>
        <taxon>Mycobacterium</taxon>
    </lineage>
</organism>